<organism>
    <name type="scientific">Mus musculus</name>
    <name type="common">Mouse</name>
    <dbReference type="NCBI Taxonomy" id="10090"/>
    <lineage>
        <taxon>Eukaryota</taxon>
        <taxon>Metazoa</taxon>
        <taxon>Chordata</taxon>
        <taxon>Craniata</taxon>
        <taxon>Vertebrata</taxon>
        <taxon>Euteleostomi</taxon>
        <taxon>Mammalia</taxon>
        <taxon>Eutheria</taxon>
        <taxon>Euarchontoglires</taxon>
        <taxon>Glires</taxon>
        <taxon>Rodentia</taxon>
        <taxon>Myomorpha</taxon>
        <taxon>Muroidea</taxon>
        <taxon>Muridae</taxon>
        <taxon>Murinae</taxon>
        <taxon>Mus</taxon>
        <taxon>Mus</taxon>
    </lineage>
</organism>
<gene>
    <name type="primary">Zscan26</name>
    <name type="synonym">Zfp187</name>
    <name type="synonym">Znf187</name>
</gene>
<sequence>MALALIHPSKRAYSLAPLNLKEELQGFKVQGDRKGVGQEPLCKQFRQLRYEESTGPREVLRRLRELCRQWLRPETHSKEQILELLVLEQFLTILPRDLQVQVLEHHPETGEELVGILEDLQLDRGKAGEQKDSAQRSRPTVLVGEPAPRREAREQPGCALPQKPEERGKETRSENGNLIAGTDSCGRMESSCTMTEPIEAQCEDLSLKKNPAMPKEKTNSQCLETKERLVQNSGLIEHDRAHTGEMSWESVGSQSSVAADHQEISKDKGHPCQECGKVFQRSSHLIRHQKIHLGEKPYQCKECGKVFSQNAGLLEHLRIHTGEKPYLCIHCGKNFRRSSHLNRHQKIHSQDEPRECKECGKTFSRALLLTHHQRVHGRSKRHHCNECGKAFSLTSDLIRHHRIHTGEKPFKCNVCQKAFRLNSHLDQHVRIHNEEKPYKCSECNEAFRQKSGLFQHQRHHHKSKLA</sequence>
<accession>Q5RJ54</accession>
<accession>Q6NVD7</accession>
<proteinExistence type="evidence at transcript level"/>
<name>ZSC26_MOUSE</name>
<evidence type="ECO:0000250" key="1">
    <source>
        <dbReference type="UniProtKB" id="Q16670"/>
    </source>
</evidence>
<evidence type="ECO:0000255" key="2">
    <source>
        <dbReference type="PROSITE-ProRule" id="PRU00042"/>
    </source>
</evidence>
<evidence type="ECO:0000255" key="3">
    <source>
        <dbReference type="PROSITE-ProRule" id="PRU00187"/>
    </source>
</evidence>
<evidence type="ECO:0000256" key="4">
    <source>
        <dbReference type="SAM" id="MobiDB-lite"/>
    </source>
</evidence>
<evidence type="ECO:0000303" key="5">
    <source>
    </source>
</evidence>
<evidence type="ECO:0000305" key="6"/>
<feature type="chain" id="PRO_0000307314" description="Zinc finger and SCAN domain-containing protein 26">
    <location>
        <begin position="1"/>
        <end position="466"/>
    </location>
</feature>
<feature type="domain" description="SCAN box" evidence="3">
    <location>
        <begin position="42"/>
        <end position="124"/>
    </location>
</feature>
<feature type="zinc finger region" description="C2H2-type 1; degenerate" evidence="2">
    <location>
        <begin position="220"/>
        <end position="242"/>
    </location>
</feature>
<feature type="zinc finger region" description="C2H2-type 2" evidence="2">
    <location>
        <begin position="270"/>
        <end position="292"/>
    </location>
</feature>
<feature type="zinc finger region" description="C2H2-type 3" evidence="2">
    <location>
        <begin position="298"/>
        <end position="320"/>
    </location>
</feature>
<feature type="zinc finger region" description="C2H2-type 4" evidence="2">
    <location>
        <begin position="326"/>
        <end position="348"/>
    </location>
</feature>
<feature type="zinc finger region" description="C2H2-type 5" evidence="2">
    <location>
        <begin position="354"/>
        <end position="376"/>
    </location>
</feature>
<feature type="zinc finger region" description="C2H2-type 6" evidence="2">
    <location>
        <begin position="382"/>
        <end position="404"/>
    </location>
</feature>
<feature type="zinc finger region" description="C2H2-type 7" evidence="2">
    <location>
        <begin position="410"/>
        <end position="432"/>
    </location>
</feature>
<feature type="zinc finger region" description="C2H2-type 8" evidence="2">
    <location>
        <begin position="438"/>
        <end position="460"/>
    </location>
</feature>
<feature type="region of interest" description="Disordered" evidence="4">
    <location>
        <begin position="124"/>
        <end position="182"/>
    </location>
</feature>
<feature type="compositionally biased region" description="Basic and acidic residues" evidence="4">
    <location>
        <begin position="124"/>
        <end position="135"/>
    </location>
</feature>
<feature type="compositionally biased region" description="Basic and acidic residues" evidence="4">
    <location>
        <begin position="163"/>
        <end position="173"/>
    </location>
</feature>
<feature type="cross-link" description="Glycyl lysine isopeptide (Lys-Gly) (interchain with G-Cter in SUMO2)" evidence="1">
    <location>
        <position position="21"/>
    </location>
</feature>
<feature type="splice variant" id="VSP_028703" description="In isoform 2." evidence="5">
    <location>
        <begin position="1"/>
        <end position="245"/>
    </location>
</feature>
<protein>
    <recommendedName>
        <fullName>Zinc finger and SCAN domain-containing protein 26</fullName>
    </recommendedName>
    <alternativeName>
        <fullName>Zinc finger protein 187</fullName>
    </alternativeName>
</protein>
<keyword id="KW-0025">Alternative splicing</keyword>
<keyword id="KW-1017">Isopeptide bond</keyword>
<keyword id="KW-0479">Metal-binding</keyword>
<keyword id="KW-0539">Nucleus</keyword>
<keyword id="KW-1185">Reference proteome</keyword>
<keyword id="KW-0677">Repeat</keyword>
<keyword id="KW-0804">Transcription</keyword>
<keyword id="KW-0805">Transcription regulation</keyword>
<keyword id="KW-0832">Ubl conjugation</keyword>
<keyword id="KW-0862">Zinc</keyword>
<keyword id="KW-0863">Zinc-finger</keyword>
<comment type="function">
    <text evidence="6">May be involved in transcriptional regulation.</text>
</comment>
<comment type="subcellular location">
    <subcellularLocation>
        <location evidence="3">Nucleus</location>
    </subcellularLocation>
</comment>
<comment type="alternative products">
    <event type="alternative splicing"/>
    <isoform>
        <id>Q5RJ54-1</id>
        <name>1</name>
        <sequence type="displayed"/>
    </isoform>
    <isoform>
        <id>Q5RJ54-2</id>
        <name>2</name>
        <sequence type="described" ref="VSP_028703"/>
    </isoform>
</comment>
<reference key="1">
    <citation type="journal article" date="2009" name="PLoS Biol.">
        <title>Lineage-specific biology revealed by a finished genome assembly of the mouse.</title>
        <authorList>
            <person name="Church D.M."/>
            <person name="Goodstadt L."/>
            <person name="Hillier L.W."/>
            <person name="Zody M.C."/>
            <person name="Goldstein S."/>
            <person name="She X."/>
            <person name="Bult C.J."/>
            <person name="Agarwala R."/>
            <person name="Cherry J.L."/>
            <person name="DiCuccio M."/>
            <person name="Hlavina W."/>
            <person name="Kapustin Y."/>
            <person name="Meric P."/>
            <person name="Maglott D."/>
            <person name="Birtle Z."/>
            <person name="Marques A.C."/>
            <person name="Graves T."/>
            <person name="Zhou S."/>
            <person name="Teague B."/>
            <person name="Potamousis K."/>
            <person name="Churas C."/>
            <person name="Place M."/>
            <person name="Herschleb J."/>
            <person name="Runnheim R."/>
            <person name="Forrest D."/>
            <person name="Amos-Landgraf J."/>
            <person name="Schwartz D.C."/>
            <person name="Cheng Z."/>
            <person name="Lindblad-Toh K."/>
            <person name="Eichler E.E."/>
            <person name="Ponting C.P."/>
        </authorList>
    </citation>
    <scope>NUCLEOTIDE SEQUENCE [LARGE SCALE GENOMIC DNA]</scope>
    <source>
        <strain>C57BL/6J</strain>
    </source>
</reference>
<reference key="2">
    <citation type="journal article" date="2004" name="Genome Res.">
        <title>The status, quality, and expansion of the NIH full-length cDNA project: the Mammalian Gene Collection (MGC).</title>
        <authorList>
            <consortium name="The MGC Project Team"/>
        </authorList>
    </citation>
    <scope>NUCLEOTIDE SEQUENCE [LARGE SCALE MRNA] (ISOFORM 2)</scope>
    <source>
        <strain>C57BL/6J</strain>
        <tissue>Eye</tissue>
    </source>
</reference>
<reference key="3">
    <citation type="journal article" date="2005" name="Science">
        <title>The transcriptional landscape of the mammalian genome.</title>
        <authorList>
            <person name="Carninci P."/>
            <person name="Kasukawa T."/>
            <person name="Katayama S."/>
            <person name="Gough J."/>
            <person name="Frith M.C."/>
            <person name="Maeda N."/>
            <person name="Oyama R."/>
            <person name="Ravasi T."/>
            <person name="Lenhard B."/>
            <person name="Wells C."/>
            <person name="Kodzius R."/>
            <person name="Shimokawa K."/>
            <person name="Bajic V.B."/>
            <person name="Brenner S.E."/>
            <person name="Batalov S."/>
            <person name="Forrest A.R."/>
            <person name="Zavolan M."/>
            <person name="Davis M.J."/>
            <person name="Wilming L.G."/>
            <person name="Aidinis V."/>
            <person name="Allen J.E."/>
            <person name="Ambesi-Impiombato A."/>
            <person name="Apweiler R."/>
            <person name="Aturaliya R.N."/>
            <person name="Bailey T.L."/>
            <person name="Bansal M."/>
            <person name="Baxter L."/>
            <person name="Beisel K.W."/>
            <person name="Bersano T."/>
            <person name="Bono H."/>
            <person name="Chalk A.M."/>
            <person name="Chiu K.P."/>
            <person name="Choudhary V."/>
            <person name="Christoffels A."/>
            <person name="Clutterbuck D.R."/>
            <person name="Crowe M.L."/>
            <person name="Dalla E."/>
            <person name="Dalrymple B.P."/>
            <person name="de Bono B."/>
            <person name="Della Gatta G."/>
            <person name="di Bernardo D."/>
            <person name="Down T."/>
            <person name="Engstrom P."/>
            <person name="Fagiolini M."/>
            <person name="Faulkner G."/>
            <person name="Fletcher C.F."/>
            <person name="Fukushima T."/>
            <person name="Furuno M."/>
            <person name="Futaki S."/>
            <person name="Gariboldi M."/>
            <person name="Georgii-Hemming P."/>
            <person name="Gingeras T.R."/>
            <person name="Gojobori T."/>
            <person name="Green R.E."/>
            <person name="Gustincich S."/>
            <person name="Harbers M."/>
            <person name="Hayashi Y."/>
            <person name="Hensch T.K."/>
            <person name="Hirokawa N."/>
            <person name="Hill D."/>
            <person name="Huminiecki L."/>
            <person name="Iacono M."/>
            <person name="Ikeo K."/>
            <person name="Iwama A."/>
            <person name="Ishikawa T."/>
            <person name="Jakt M."/>
            <person name="Kanapin A."/>
            <person name="Katoh M."/>
            <person name="Kawasawa Y."/>
            <person name="Kelso J."/>
            <person name="Kitamura H."/>
            <person name="Kitano H."/>
            <person name="Kollias G."/>
            <person name="Krishnan S.P."/>
            <person name="Kruger A."/>
            <person name="Kummerfeld S.K."/>
            <person name="Kurochkin I.V."/>
            <person name="Lareau L.F."/>
            <person name="Lazarevic D."/>
            <person name="Lipovich L."/>
            <person name="Liu J."/>
            <person name="Liuni S."/>
            <person name="McWilliam S."/>
            <person name="Madan Babu M."/>
            <person name="Madera M."/>
            <person name="Marchionni L."/>
            <person name="Matsuda H."/>
            <person name="Matsuzawa S."/>
            <person name="Miki H."/>
            <person name="Mignone F."/>
            <person name="Miyake S."/>
            <person name="Morris K."/>
            <person name="Mottagui-Tabar S."/>
            <person name="Mulder N."/>
            <person name="Nakano N."/>
            <person name="Nakauchi H."/>
            <person name="Ng P."/>
            <person name="Nilsson R."/>
            <person name="Nishiguchi S."/>
            <person name="Nishikawa S."/>
            <person name="Nori F."/>
            <person name="Ohara O."/>
            <person name="Okazaki Y."/>
            <person name="Orlando V."/>
            <person name="Pang K.C."/>
            <person name="Pavan W.J."/>
            <person name="Pavesi G."/>
            <person name="Pesole G."/>
            <person name="Petrovsky N."/>
            <person name="Piazza S."/>
            <person name="Reed J."/>
            <person name="Reid J.F."/>
            <person name="Ring B.Z."/>
            <person name="Ringwald M."/>
            <person name="Rost B."/>
            <person name="Ruan Y."/>
            <person name="Salzberg S.L."/>
            <person name="Sandelin A."/>
            <person name="Schneider C."/>
            <person name="Schoenbach C."/>
            <person name="Sekiguchi K."/>
            <person name="Semple C.A."/>
            <person name="Seno S."/>
            <person name="Sessa L."/>
            <person name="Sheng Y."/>
            <person name="Shibata Y."/>
            <person name="Shimada H."/>
            <person name="Shimada K."/>
            <person name="Silva D."/>
            <person name="Sinclair B."/>
            <person name="Sperling S."/>
            <person name="Stupka E."/>
            <person name="Sugiura K."/>
            <person name="Sultana R."/>
            <person name="Takenaka Y."/>
            <person name="Taki K."/>
            <person name="Tammoja K."/>
            <person name="Tan S.L."/>
            <person name="Tang S."/>
            <person name="Taylor M.S."/>
            <person name="Tegner J."/>
            <person name="Teichmann S.A."/>
            <person name="Ueda H.R."/>
            <person name="van Nimwegen E."/>
            <person name="Verardo R."/>
            <person name="Wei C.L."/>
            <person name="Yagi K."/>
            <person name="Yamanishi H."/>
            <person name="Zabarovsky E."/>
            <person name="Zhu S."/>
            <person name="Zimmer A."/>
            <person name="Hide W."/>
            <person name="Bult C."/>
            <person name="Grimmond S.M."/>
            <person name="Teasdale R.D."/>
            <person name="Liu E.T."/>
            <person name="Brusic V."/>
            <person name="Quackenbush J."/>
            <person name="Wahlestedt C."/>
            <person name="Mattick J.S."/>
            <person name="Hume D.A."/>
            <person name="Kai C."/>
            <person name="Sasaki D."/>
            <person name="Tomaru Y."/>
            <person name="Fukuda S."/>
            <person name="Kanamori-Katayama M."/>
            <person name="Suzuki M."/>
            <person name="Aoki J."/>
            <person name="Arakawa T."/>
            <person name="Iida J."/>
            <person name="Imamura K."/>
            <person name="Itoh M."/>
            <person name="Kato T."/>
            <person name="Kawaji H."/>
            <person name="Kawagashira N."/>
            <person name="Kawashima T."/>
            <person name="Kojima M."/>
            <person name="Kondo S."/>
            <person name="Konno H."/>
            <person name="Nakano K."/>
            <person name="Ninomiya N."/>
            <person name="Nishio T."/>
            <person name="Okada M."/>
            <person name="Plessy C."/>
            <person name="Shibata K."/>
            <person name="Shiraki T."/>
            <person name="Suzuki S."/>
            <person name="Tagami M."/>
            <person name="Waki K."/>
            <person name="Watahiki A."/>
            <person name="Okamura-Oho Y."/>
            <person name="Suzuki H."/>
            <person name="Kawai J."/>
            <person name="Hayashizaki Y."/>
        </authorList>
    </citation>
    <scope>NUCLEOTIDE SEQUENCE [LARGE SCALE MRNA] OF 1-66 (ISOFORM 1)</scope>
    <source>
        <strain>C57BL/6J</strain>
        <tissue>Embryo</tissue>
    </source>
</reference>
<dbReference type="EMBL" id="BX001068">
    <property type="status" value="NOT_ANNOTATED_CDS"/>
    <property type="molecule type" value="Genomic_DNA"/>
</dbReference>
<dbReference type="EMBL" id="BC068174">
    <property type="protein sequence ID" value="AAH68174.1"/>
    <property type="molecule type" value="mRNA"/>
</dbReference>
<dbReference type="EMBL" id="BY139219">
    <property type="status" value="NOT_ANNOTATED_CDS"/>
    <property type="molecule type" value="mRNA"/>
</dbReference>
<dbReference type="CCDS" id="CCDS84009.1">
    <molecule id="Q5RJ54-1"/>
</dbReference>
<dbReference type="RefSeq" id="NP_001013808.2">
    <property type="nucleotide sequence ID" value="NM_001013786.3"/>
</dbReference>
<dbReference type="RefSeq" id="NP_001334420.1">
    <molecule id="Q5RJ54-1"/>
    <property type="nucleotide sequence ID" value="NM_001347491.2"/>
</dbReference>
<dbReference type="RefSeq" id="NP_001413272.1">
    <molecule id="Q5RJ54-1"/>
    <property type="nucleotide sequence ID" value="NM_001426343.1"/>
</dbReference>
<dbReference type="RefSeq" id="XP_011242620.1">
    <property type="nucleotide sequence ID" value="XM_011244318.2"/>
</dbReference>
<dbReference type="SMR" id="Q5RJ54"/>
<dbReference type="BioGRID" id="240783">
    <property type="interactions" value="2"/>
</dbReference>
<dbReference type="FunCoup" id="Q5RJ54">
    <property type="interactions" value="1330"/>
</dbReference>
<dbReference type="IntAct" id="Q5RJ54">
    <property type="interactions" value="1"/>
</dbReference>
<dbReference type="STRING" id="10090.ENSMUSP00000106111"/>
<dbReference type="iPTMnet" id="Q5RJ54"/>
<dbReference type="PhosphoSitePlus" id="Q5RJ54"/>
<dbReference type="jPOST" id="Q5RJ54"/>
<dbReference type="PaxDb" id="10090-ENSMUSP00000106111"/>
<dbReference type="PeptideAtlas" id="Q5RJ54"/>
<dbReference type="ProteomicsDB" id="302151">
    <molecule id="Q5RJ54-1"/>
</dbReference>
<dbReference type="ProteomicsDB" id="302152">
    <molecule id="Q5RJ54-2"/>
</dbReference>
<dbReference type="Pumba" id="Q5RJ54"/>
<dbReference type="Antibodypedia" id="6168">
    <property type="antibodies" value="196 antibodies from 24 providers"/>
</dbReference>
<dbReference type="DNASU" id="432731"/>
<dbReference type="Ensembl" id="ENSMUST00000110485.3">
    <molecule id="Q5RJ54-1"/>
    <property type="protein sequence ID" value="ENSMUSP00000106111.2"/>
    <property type="gene ID" value="ENSMUSG00000022228.15"/>
</dbReference>
<dbReference type="GeneID" id="432731"/>
<dbReference type="KEGG" id="mmu:432731"/>
<dbReference type="UCSC" id="uc007pql.2">
    <molecule id="Q5RJ54-1"/>
    <property type="organism name" value="mouse"/>
</dbReference>
<dbReference type="AGR" id="MGI:3531417"/>
<dbReference type="CTD" id="7741"/>
<dbReference type="MGI" id="MGI:3531417">
    <property type="gene designation" value="Zscan26"/>
</dbReference>
<dbReference type="VEuPathDB" id="HostDB:ENSMUSG00000022228"/>
<dbReference type="eggNOG" id="KOG1721">
    <property type="taxonomic scope" value="Eukaryota"/>
</dbReference>
<dbReference type="GeneTree" id="ENSGT00940000162298"/>
<dbReference type="HOGENOM" id="CLU_002678_49_2_1"/>
<dbReference type="InParanoid" id="Q5RJ54"/>
<dbReference type="OMA" id="IKHEGSH"/>
<dbReference type="OrthoDB" id="6077919at2759"/>
<dbReference type="PhylomeDB" id="Q5RJ54"/>
<dbReference type="TreeFam" id="TF338304"/>
<dbReference type="BioGRID-ORCS" id="432731">
    <property type="hits" value="2 hits in 61 CRISPR screens"/>
</dbReference>
<dbReference type="PRO" id="PR:Q5RJ54"/>
<dbReference type="Proteomes" id="UP000000589">
    <property type="component" value="Chromosome 13"/>
</dbReference>
<dbReference type="RNAct" id="Q5RJ54">
    <property type="molecule type" value="protein"/>
</dbReference>
<dbReference type="Bgee" id="ENSMUSG00000022228">
    <property type="expression patterns" value="Expressed in vestibular membrane of cochlear duct and 269 other cell types or tissues"/>
</dbReference>
<dbReference type="ExpressionAtlas" id="Q5RJ54">
    <property type="expression patterns" value="baseline and differential"/>
</dbReference>
<dbReference type="GO" id="GO:0005829">
    <property type="term" value="C:cytosol"/>
    <property type="evidence" value="ECO:0007669"/>
    <property type="project" value="Ensembl"/>
</dbReference>
<dbReference type="GO" id="GO:0005654">
    <property type="term" value="C:nucleoplasm"/>
    <property type="evidence" value="ECO:0007669"/>
    <property type="project" value="Ensembl"/>
</dbReference>
<dbReference type="GO" id="GO:0008270">
    <property type="term" value="F:zinc ion binding"/>
    <property type="evidence" value="ECO:0007669"/>
    <property type="project" value="UniProtKB-KW"/>
</dbReference>
<dbReference type="CDD" id="cd07936">
    <property type="entry name" value="SCAN"/>
    <property type="match status" value="1"/>
</dbReference>
<dbReference type="FunFam" id="3.30.160.60:FF:000062">
    <property type="entry name" value="RB-associated KRAB zinc finger protein-like"/>
    <property type="match status" value="1"/>
</dbReference>
<dbReference type="FunFam" id="3.30.160.60:FF:001991">
    <property type="entry name" value="Zinc finger and SCAN domain containing 26"/>
    <property type="match status" value="1"/>
</dbReference>
<dbReference type="FunFam" id="3.30.160.60:FF:000467">
    <property type="entry name" value="Zinc finger and SCAN domain-containing 21"/>
    <property type="match status" value="1"/>
</dbReference>
<dbReference type="FunFam" id="3.30.160.60:FF:001661">
    <property type="entry name" value="Zinc finger and SCAN domain-containing 26"/>
    <property type="match status" value="1"/>
</dbReference>
<dbReference type="FunFam" id="3.30.160.60:FF:002516">
    <property type="entry name" value="Zinc finger and SCAN domain-containing protein 26"/>
    <property type="match status" value="1"/>
</dbReference>
<dbReference type="FunFam" id="3.30.160.60:FF:000358">
    <property type="entry name" value="zinc finger protein 24"/>
    <property type="match status" value="1"/>
</dbReference>
<dbReference type="FunFam" id="1.10.4020.10:FF:000001">
    <property type="entry name" value="zinc finger protein 263 isoform X1"/>
    <property type="match status" value="1"/>
</dbReference>
<dbReference type="FunFam" id="3.30.160.60:FF:001498">
    <property type="entry name" value="Zinc finger protein 404"/>
    <property type="match status" value="1"/>
</dbReference>
<dbReference type="Gene3D" id="3.30.160.60">
    <property type="entry name" value="Classic Zinc Finger"/>
    <property type="match status" value="7"/>
</dbReference>
<dbReference type="Gene3D" id="1.10.4020.10">
    <property type="entry name" value="DNA breaking-rejoining enzymes"/>
    <property type="match status" value="1"/>
</dbReference>
<dbReference type="InterPro" id="IPR003309">
    <property type="entry name" value="SCAN_dom"/>
</dbReference>
<dbReference type="InterPro" id="IPR038269">
    <property type="entry name" value="SCAN_sf"/>
</dbReference>
<dbReference type="InterPro" id="IPR036236">
    <property type="entry name" value="Znf_C2H2_sf"/>
</dbReference>
<dbReference type="InterPro" id="IPR013087">
    <property type="entry name" value="Znf_C2H2_type"/>
</dbReference>
<dbReference type="PANTHER" id="PTHR23226">
    <property type="entry name" value="ZINC FINGER AND SCAN DOMAIN-CONTAINING"/>
    <property type="match status" value="1"/>
</dbReference>
<dbReference type="PANTHER" id="PTHR23226:SF76">
    <property type="entry name" value="ZINC FINGER AND SCAN DOMAIN-CONTAINING PROTEIN 23"/>
    <property type="match status" value="1"/>
</dbReference>
<dbReference type="Pfam" id="PF02023">
    <property type="entry name" value="SCAN"/>
    <property type="match status" value="1"/>
</dbReference>
<dbReference type="Pfam" id="PF00096">
    <property type="entry name" value="zf-C2H2"/>
    <property type="match status" value="7"/>
</dbReference>
<dbReference type="SMART" id="SM00431">
    <property type="entry name" value="SCAN"/>
    <property type="match status" value="1"/>
</dbReference>
<dbReference type="SMART" id="SM00355">
    <property type="entry name" value="ZnF_C2H2"/>
    <property type="match status" value="7"/>
</dbReference>
<dbReference type="SUPFAM" id="SSF57667">
    <property type="entry name" value="beta-beta-alpha zinc fingers"/>
    <property type="match status" value="4"/>
</dbReference>
<dbReference type="SUPFAM" id="SSF47353">
    <property type="entry name" value="Retrovirus capsid dimerization domain-like"/>
    <property type="match status" value="1"/>
</dbReference>
<dbReference type="PROSITE" id="PS50804">
    <property type="entry name" value="SCAN_BOX"/>
    <property type="match status" value="1"/>
</dbReference>
<dbReference type="PROSITE" id="PS00028">
    <property type="entry name" value="ZINC_FINGER_C2H2_1"/>
    <property type="match status" value="7"/>
</dbReference>
<dbReference type="PROSITE" id="PS50157">
    <property type="entry name" value="ZINC_FINGER_C2H2_2"/>
    <property type="match status" value="7"/>
</dbReference>